<name>SOTI_DROYA</name>
<accession>B4PST7</accession>
<feature type="chain" id="PRO_0000379451" description="Male-specific protein scotti">
    <location>
        <begin position="1"/>
        <end position="150"/>
    </location>
</feature>
<feature type="region of interest" description="Disordered" evidence="3">
    <location>
        <begin position="60"/>
        <end position="84"/>
    </location>
</feature>
<feature type="glycosylation site" description="N-linked (GlcNAc...) asparagine" evidence="2">
    <location>
        <position position="131"/>
    </location>
</feature>
<reference evidence="5" key="1">
    <citation type="journal article" date="2007" name="Nature">
        <title>Evolution of genes and genomes on the Drosophila phylogeny.</title>
        <authorList>
            <consortium name="Drosophila 12 genomes consortium"/>
        </authorList>
    </citation>
    <scope>NUCLEOTIDE SEQUENCE [LARGE SCALE GENOMIC DNA]</scope>
    <source>
        <strain evidence="5">Tai18E2 / Tucson 14021-0261.01</strain>
    </source>
</reference>
<gene>
    <name evidence="1" type="primary">soti</name>
    <name type="ORF">GE26454</name>
</gene>
<proteinExistence type="inferred from homology"/>
<protein>
    <recommendedName>
        <fullName evidence="1">Male-specific protein scotti</fullName>
    </recommendedName>
</protein>
<sequence length="150" mass="16871">MDTLLEHEAADLYDEQQIDRIGDAVTGDAGDDSDDTLEDGQQLLGVNRQMDILLDAPQEPPMAVFPARGGPNGGPPRLRKKRSFYTMVKPTPPCQSREPEMCRLMASVTRAMRQVREDQRGEYFANYLVENMTSQNYPNGVGLPQHWGQF</sequence>
<evidence type="ECO:0000250" key="1">
    <source>
        <dbReference type="UniProtKB" id="Q9VFK3"/>
    </source>
</evidence>
<evidence type="ECO:0000255" key="2"/>
<evidence type="ECO:0000256" key="3">
    <source>
        <dbReference type="SAM" id="MobiDB-lite"/>
    </source>
</evidence>
<evidence type="ECO:0000305" key="4"/>
<evidence type="ECO:0000312" key="5">
    <source>
        <dbReference type="EMBL" id="EDW97583.1"/>
    </source>
</evidence>
<dbReference type="EMBL" id="CM000160">
    <property type="protein sequence ID" value="EDW97583.1"/>
    <property type="status" value="ALT_SEQ"/>
    <property type="molecule type" value="Genomic_DNA"/>
</dbReference>
<dbReference type="SMR" id="B4PST7"/>
<dbReference type="GlyCosmos" id="B4PST7">
    <property type="glycosylation" value="1 site, No reported glycans"/>
</dbReference>
<dbReference type="GeneID" id="6537313"/>
<dbReference type="KEGG" id="dya:Dyak_GE26454"/>
<dbReference type="OrthoDB" id="7867455at2759"/>
<dbReference type="Proteomes" id="UP000002282">
    <property type="component" value="Chromosome 3R"/>
</dbReference>
<dbReference type="GO" id="GO:0007291">
    <property type="term" value="P:sperm individualization"/>
    <property type="evidence" value="ECO:0000250"/>
    <property type="project" value="UniProtKB"/>
</dbReference>
<dbReference type="InterPro" id="IPR031397">
    <property type="entry name" value="Soti"/>
</dbReference>
<dbReference type="Pfam" id="PF17079">
    <property type="entry name" value="SOTI"/>
    <property type="match status" value="1"/>
</dbReference>
<keyword id="KW-0217">Developmental protein</keyword>
<keyword id="KW-0221">Differentiation</keyword>
<keyword id="KW-0325">Glycoprotein</keyword>
<keyword id="KW-0744">Spermatogenesis</keyword>
<organism>
    <name type="scientific">Drosophila yakuba</name>
    <name type="common">Fruit fly</name>
    <dbReference type="NCBI Taxonomy" id="7245"/>
    <lineage>
        <taxon>Eukaryota</taxon>
        <taxon>Metazoa</taxon>
        <taxon>Ecdysozoa</taxon>
        <taxon>Arthropoda</taxon>
        <taxon>Hexapoda</taxon>
        <taxon>Insecta</taxon>
        <taxon>Pterygota</taxon>
        <taxon>Neoptera</taxon>
        <taxon>Endopterygota</taxon>
        <taxon>Diptera</taxon>
        <taxon>Brachycera</taxon>
        <taxon>Muscomorpha</taxon>
        <taxon>Ephydroidea</taxon>
        <taxon>Drosophilidae</taxon>
        <taxon>Drosophila</taxon>
        <taxon>Sophophora</taxon>
    </lineage>
</organism>
<comment type="function">
    <text evidence="1">Post-meiotically transcribed gene that has a role in late spermiogenesis; required for actin cone progression during spermatid individualization.</text>
</comment>
<comment type="similarity">
    <text evidence="4">Belongs to the male-specific scotti family.</text>
</comment>
<comment type="sequence caution" evidence="4">
    <conflict type="erroneous gene model prediction">
        <sequence resource="EMBL-CDS" id="EDW97583"/>
    </conflict>
</comment>